<feature type="chain" id="PRO_1000091754" description="Elongation factor G">
    <location>
        <begin position="1"/>
        <end position="704"/>
    </location>
</feature>
<feature type="domain" description="tr-type G">
    <location>
        <begin position="8"/>
        <end position="290"/>
    </location>
</feature>
<feature type="binding site" evidence="1">
    <location>
        <begin position="17"/>
        <end position="24"/>
    </location>
    <ligand>
        <name>GTP</name>
        <dbReference type="ChEBI" id="CHEBI:37565"/>
    </ligand>
</feature>
<feature type="binding site" evidence="1">
    <location>
        <begin position="88"/>
        <end position="92"/>
    </location>
    <ligand>
        <name>GTP</name>
        <dbReference type="ChEBI" id="CHEBI:37565"/>
    </ligand>
</feature>
<feature type="binding site" evidence="1">
    <location>
        <begin position="142"/>
        <end position="145"/>
    </location>
    <ligand>
        <name>GTP</name>
        <dbReference type="ChEBI" id="CHEBI:37565"/>
    </ligand>
</feature>
<proteinExistence type="inferred from homology"/>
<gene>
    <name evidence="1" type="primary">fusA</name>
    <name type="ordered locus">SeAg_B3643</name>
</gene>
<organism>
    <name type="scientific">Salmonella agona (strain SL483)</name>
    <dbReference type="NCBI Taxonomy" id="454166"/>
    <lineage>
        <taxon>Bacteria</taxon>
        <taxon>Pseudomonadati</taxon>
        <taxon>Pseudomonadota</taxon>
        <taxon>Gammaproteobacteria</taxon>
        <taxon>Enterobacterales</taxon>
        <taxon>Enterobacteriaceae</taxon>
        <taxon>Salmonella</taxon>
    </lineage>
</organism>
<evidence type="ECO:0000255" key="1">
    <source>
        <dbReference type="HAMAP-Rule" id="MF_00054"/>
    </source>
</evidence>
<protein>
    <recommendedName>
        <fullName evidence="1">Elongation factor G</fullName>
        <shortName evidence="1">EF-G</shortName>
    </recommendedName>
</protein>
<dbReference type="EMBL" id="CP001138">
    <property type="protein sequence ID" value="ACH48460.1"/>
    <property type="molecule type" value="Genomic_DNA"/>
</dbReference>
<dbReference type="RefSeq" id="WP_000124693.1">
    <property type="nucleotide sequence ID" value="NC_011149.1"/>
</dbReference>
<dbReference type="SMR" id="B5F8F8"/>
<dbReference type="KEGG" id="sea:SeAg_B3643"/>
<dbReference type="HOGENOM" id="CLU_002794_4_1_6"/>
<dbReference type="Proteomes" id="UP000008819">
    <property type="component" value="Chromosome"/>
</dbReference>
<dbReference type="GO" id="GO:0005737">
    <property type="term" value="C:cytoplasm"/>
    <property type="evidence" value="ECO:0007669"/>
    <property type="project" value="UniProtKB-SubCell"/>
</dbReference>
<dbReference type="GO" id="GO:0005525">
    <property type="term" value="F:GTP binding"/>
    <property type="evidence" value="ECO:0007669"/>
    <property type="project" value="UniProtKB-UniRule"/>
</dbReference>
<dbReference type="GO" id="GO:0003924">
    <property type="term" value="F:GTPase activity"/>
    <property type="evidence" value="ECO:0007669"/>
    <property type="project" value="InterPro"/>
</dbReference>
<dbReference type="GO" id="GO:0097216">
    <property type="term" value="F:guanosine tetraphosphate binding"/>
    <property type="evidence" value="ECO:0007669"/>
    <property type="project" value="UniProtKB-ARBA"/>
</dbReference>
<dbReference type="GO" id="GO:0003746">
    <property type="term" value="F:translation elongation factor activity"/>
    <property type="evidence" value="ECO:0007669"/>
    <property type="project" value="UniProtKB-UniRule"/>
</dbReference>
<dbReference type="GO" id="GO:0032790">
    <property type="term" value="P:ribosome disassembly"/>
    <property type="evidence" value="ECO:0007669"/>
    <property type="project" value="TreeGrafter"/>
</dbReference>
<dbReference type="CDD" id="cd01886">
    <property type="entry name" value="EF-G"/>
    <property type="match status" value="1"/>
</dbReference>
<dbReference type="CDD" id="cd16262">
    <property type="entry name" value="EFG_III"/>
    <property type="match status" value="1"/>
</dbReference>
<dbReference type="CDD" id="cd01434">
    <property type="entry name" value="EFG_mtEFG1_IV"/>
    <property type="match status" value="1"/>
</dbReference>
<dbReference type="CDD" id="cd03713">
    <property type="entry name" value="EFG_mtEFG_C"/>
    <property type="match status" value="1"/>
</dbReference>
<dbReference type="CDD" id="cd04088">
    <property type="entry name" value="EFG_mtEFG_II"/>
    <property type="match status" value="1"/>
</dbReference>
<dbReference type="FunFam" id="2.40.30.10:FF:000006">
    <property type="entry name" value="Elongation factor G"/>
    <property type="match status" value="1"/>
</dbReference>
<dbReference type="FunFam" id="3.30.230.10:FF:000003">
    <property type="entry name" value="Elongation factor G"/>
    <property type="match status" value="1"/>
</dbReference>
<dbReference type="FunFam" id="3.30.70.240:FF:000001">
    <property type="entry name" value="Elongation factor G"/>
    <property type="match status" value="1"/>
</dbReference>
<dbReference type="FunFam" id="3.30.70.870:FF:000001">
    <property type="entry name" value="Elongation factor G"/>
    <property type="match status" value="1"/>
</dbReference>
<dbReference type="FunFam" id="3.40.50.300:FF:000029">
    <property type="entry name" value="Elongation factor G"/>
    <property type="match status" value="1"/>
</dbReference>
<dbReference type="Gene3D" id="3.30.230.10">
    <property type="match status" value="1"/>
</dbReference>
<dbReference type="Gene3D" id="3.30.70.240">
    <property type="match status" value="1"/>
</dbReference>
<dbReference type="Gene3D" id="3.30.70.870">
    <property type="entry name" value="Elongation Factor G (Translational Gtpase), domain 3"/>
    <property type="match status" value="1"/>
</dbReference>
<dbReference type="Gene3D" id="3.40.50.300">
    <property type="entry name" value="P-loop containing nucleotide triphosphate hydrolases"/>
    <property type="match status" value="1"/>
</dbReference>
<dbReference type="Gene3D" id="2.40.30.10">
    <property type="entry name" value="Translation factors"/>
    <property type="match status" value="1"/>
</dbReference>
<dbReference type="HAMAP" id="MF_00054_B">
    <property type="entry name" value="EF_G_EF_2_B"/>
    <property type="match status" value="1"/>
</dbReference>
<dbReference type="InterPro" id="IPR041095">
    <property type="entry name" value="EFG_II"/>
</dbReference>
<dbReference type="InterPro" id="IPR009022">
    <property type="entry name" value="EFG_III"/>
</dbReference>
<dbReference type="InterPro" id="IPR035647">
    <property type="entry name" value="EFG_III/V"/>
</dbReference>
<dbReference type="InterPro" id="IPR047872">
    <property type="entry name" value="EFG_IV"/>
</dbReference>
<dbReference type="InterPro" id="IPR035649">
    <property type="entry name" value="EFG_V"/>
</dbReference>
<dbReference type="InterPro" id="IPR000640">
    <property type="entry name" value="EFG_V-like"/>
</dbReference>
<dbReference type="InterPro" id="IPR004161">
    <property type="entry name" value="EFTu-like_2"/>
</dbReference>
<dbReference type="InterPro" id="IPR031157">
    <property type="entry name" value="G_TR_CS"/>
</dbReference>
<dbReference type="InterPro" id="IPR027417">
    <property type="entry name" value="P-loop_NTPase"/>
</dbReference>
<dbReference type="InterPro" id="IPR020568">
    <property type="entry name" value="Ribosomal_Su5_D2-typ_SF"/>
</dbReference>
<dbReference type="InterPro" id="IPR014721">
    <property type="entry name" value="Ribsml_uS5_D2-typ_fold_subgr"/>
</dbReference>
<dbReference type="InterPro" id="IPR005225">
    <property type="entry name" value="Small_GTP-bd"/>
</dbReference>
<dbReference type="InterPro" id="IPR000795">
    <property type="entry name" value="T_Tr_GTP-bd_dom"/>
</dbReference>
<dbReference type="InterPro" id="IPR009000">
    <property type="entry name" value="Transl_B-barrel_sf"/>
</dbReference>
<dbReference type="InterPro" id="IPR004540">
    <property type="entry name" value="Transl_elong_EFG/EF2"/>
</dbReference>
<dbReference type="InterPro" id="IPR005517">
    <property type="entry name" value="Transl_elong_EFG/EF2_IV"/>
</dbReference>
<dbReference type="NCBIfam" id="TIGR00484">
    <property type="entry name" value="EF-G"/>
    <property type="match status" value="1"/>
</dbReference>
<dbReference type="NCBIfam" id="NF009381">
    <property type="entry name" value="PRK12740.1-5"/>
    <property type="match status" value="1"/>
</dbReference>
<dbReference type="NCBIfam" id="TIGR00231">
    <property type="entry name" value="small_GTP"/>
    <property type="match status" value="1"/>
</dbReference>
<dbReference type="PANTHER" id="PTHR43261:SF1">
    <property type="entry name" value="RIBOSOME-RELEASING FACTOR 2, MITOCHONDRIAL"/>
    <property type="match status" value="1"/>
</dbReference>
<dbReference type="PANTHER" id="PTHR43261">
    <property type="entry name" value="TRANSLATION ELONGATION FACTOR G-RELATED"/>
    <property type="match status" value="1"/>
</dbReference>
<dbReference type="Pfam" id="PF00679">
    <property type="entry name" value="EFG_C"/>
    <property type="match status" value="1"/>
</dbReference>
<dbReference type="Pfam" id="PF14492">
    <property type="entry name" value="EFG_III"/>
    <property type="match status" value="1"/>
</dbReference>
<dbReference type="Pfam" id="PF03764">
    <property type="entry name" value="EFG_IV"/>
    <property type="match status" value="1"/>
</dbReference>
<dbReference type="Pfam" id="PF00009">
    <property type="entry name" value="GTP_EFTU"/>
    <property type="match status" value="1"/>
</dbReference>
<dbReference type="Pfam" id="PF03144">
    <property type="entry name" value="GTP_EFTU_D2"/>
    <property type="match status" value="1"/>
</dbReference>
<dbReference type="PRINTS" id="PR00315">
    <property type="entry name" value="ELONGATNFCT"/>
</dbReference>
<dbReference type="SMART" id="SM00838">
    <property type="entry name" value="EFG_C"/>
    <property type="match status" value="1"/>
</dbReference>
<dbReference type="SMART" id="SM00889">
    <property type="entry name" value="EFG_IV"/>
    <property type="match status" value="1"/>
</dbReference>
<dbReference type="SUPFAM" id="SSF54980">
    <property type="entry name" value="EF-G C-terminal domain-like"/>
    <property type="match status" value="2"/>
</dbReference>
<dbReference type="SUPFAM" id="SSF52540">
    <property type="entry name" value="P-loop containing nucleoside triphosphate hydrolases"/>
    <property type="match status" value="1"/>
</dbReference>
<dbReference type="SUPFAM" id="SSF54211">
    <property type="entry name" value="Ribosomal protein S5 domain 2-like"/>
    <property type="match status" value="1"/>
</dbReference>
<dbReference type="SUPFAM" id="SSF50447">
    <property type="entry name" value="Translation proteins"/>
    <property type="match status" value="1"/>
</dbReference>
<dbReference type="PROSITE" id="PS00301">
    <property type="entry name" value="G_TR_1"/>
    <property type="match status" value="1"/>
</dbReference>
<dbReference type="PROSITE" id="PS51722">
    <property type="entry name" value="G_TR_2"/>
    <property type="match status" value="1"/>
</dbReference>
<name>EFG_SALA4</name>
<reference key="1">
    <citation type="journal article" date="2011" name="J. Bacteriol.">
        <title>Comparative genomics of 28 Salmonella enterica isolates: evidence for CRISPR-mediated adaptive sublineage evolution.</title>
        <authorList>
            <person name="Fricke W.F."/>
            <person name="Mammel M.K."/>
            <person name="McDermott P.F."/>
            <person name="Tartera C."/>
            <person name="White D.G."/>
            <person name="Leclerc J.E."/>
            <person name="Ravel J."/>
            <person name="Cebula T.A."/>
        </authorList>
    </citation>
    <scope>NUCLEOTIDE SEQUENCE [LARGE SCALE GENOMIC DNA]</scope>
    <source>
        <strain>SL483</strain>
    </source>
</reference>
<sequence>MARTTPIARYRNIGISAHIDAGKTTTTERILFYTGVNHKIGEVHDGAATMDWMEQEQERGITITSAATTAFWSGMAKQYEPHRINIIDTPGHVDFTIEVERSMRVLDGAVMVYCAVGGVQPQSETVWRQANKYKVPRIAFVNKMDRMGANFLKVVGQIKTRLGANPVPLQLAIGAEEGFTGVVDLVKMKAINWNDADQGVTFEYEDIPADMQDLANEWHQNLIESAAEASEELMEKYLGGEELTEEEIKQALRQRVLNNEIILVTCGSAFKNKGVQAMLDAVIDYLPSPVDVPAINGILDDGKDTPAERHASDDEPFSALAFKIATDPFVGNLTFFRVYSGVVNSGDTVLNSVKTARERFGRIVQMHANKREEIKEVRAGDIAAAIGLKDVTTGDTLCDPENPIILERMEFPEPVISIAVEPKTKADQEKMGLALGRLAKEDPSFRVWTDEESNQTIIAGMGELHLDIIVDRMKREFNVEANVGKPQVAYREAIRAKVTDIEGKHAKQSGGRGQYGHVVIDMYPLEPGSNPKGYEFINDIKGGVIPGEYIPAVDKGIQEQLKSGPLAGYPVVDLGVRLHFGSYHDVDSSELAFKLAASIAFKEGFKKAKPVLLEPIMKVEVETPEENTGDVIGDLSRRRGMLKGQESEVTGVKIHAEVPLSEMFGYATQLRSLTKGRASYTMEFLKYDDAPNNVAQAVIEARGK</sequence>
<keyword id="KW-0963">Cytoplasm</keyword>
<keyword id="KW-0251">Elongation factor</keyword>
<keyword id="KW-0342">GTP-binding</keyword>
<keyword id="KW-0547">Nucleotide-binding</keyword>
<keyword id="KW-0648">Protein biosynthesis</keyword>
<comment type="function">
    <text evidence="1">Catalyzes the GTP-dependent ribosomal translocation step during translation elongation. During this step, the ribosome changes from the pre-translocational (PRE) to the post-translocational (POST) state as the newly formed A-site-bound peptidyl-tRNA and P-site-bound deacylated tRNA move to the P and E sites, respectively. Catalyzes the coordinated movement of the two tRNA molecules, the mRNA and conformational changes in the ribosome.</text>
</comment>
<comment type="subcellular location">
    <subcellularLocation>
        <location evidence="1">Cytoplasm</location>
    </subcellularLocation>
</comment>
<comment type="similarity">
    <text evidence="1">Belongs to the TRAFAC class translation factor GTPase superfamily. Classic translation factor GTPase family. EF-G/EF-2 subfamily.</text>
</comment>
<accession>B5F8F8</accession>